<comment type="induction">
    <text evidence="1">By elevated hydrostatic pressure.</text>
</comment>
<comment type="miscellaneous">
    <text evidence="1">On the 2D-gel the determined MW of this unknown protein is: 65 kDa.</text>
</comment>
<protein>
    <recommendedName>
        <fullName>Unknown protein 6 from 2D-PAGE</fullName>
    </recommendedName>
</protein>
<sequence>AQLQNPVGYELQHK</sequence>
<accession>P83536</accession>
<evidence type="ECO:0000269" key="1">
    <source>
    </source>
</evidence>
<evidence type="ECO:0000303" key="2">
    <source>
    </source>
</evidence>
<evidence type="ECO:0000305" key="3"/>
<name>UP06_FRUSA</name>
<feature type="chain" id="PRO_0000285977" description="Unknown protein 6 from 2D-PAGE">
    <location>
        <begin position="1" status="less than"/>
        <end position="14" status="greater than"/>
    </location>
</feature>
<feature type="non-terminal residue" evidence="2">
    <location>
        <position position="1"/>
    </location>
</feature>
<feature type="non-terminal residue" evidence="2">
    <location>
        <position position="14"/>
    </location>
</feature>
<organism>
    <name type="scientific">Fructilactobacillus sanfranciscensis</name>
    <name type="common">Lactobacillus sanfranciscensis</name>
    <dbReference type="NCBI Taxonomy" id="1625"/>
    <lineage>
        <taxon>Bacteria</taxon>
        <taxon>Bacillati</taxon>
        <taxon>Bacillota</taxon>
        <taxon>Bacilli</taxon>
        <taxon>Lactobacillales</taxon>
        <taxon>Lactobacillaceae</taxon>
        <taxon>Fructilactobacillus</taxon>
    </lineage>
</organism>
<keyword id="KW-0903">Direct protein sequencing</keyword>
<reference evidence="3" key="1">
    <citation type="journal article" date="2002" name="Proteomics">
        <title>High pressure effects step-wise altered protein expression in Lactobacillus sanfranciscensis.</title>
        <authorList>
            <person name="Drews O."/>
            <person name="Weiss W."/>
            <person name="Reil G."/>
            <person name="Parlar H."/>
            <person name="Wait R."/>
            <person name="Goerg A."/>
        </authorList>
    </citation>
    <scope>PROTEIN SEQUENCE</scope>
    <scope>INDUCTION</scope>
    <source>
        <strain evidence="1">ATCC 27651 / DSM 20451 / JCM 5668 / KCTC 3205 / NCIMB 702811 / NRRL B-3934 / L-12</strain>
    </source>
</reference>
<proteinExistence type="evidence at protein level"/>